<feature type="chain" id="PRO_0000189589" description="Motility protein B">
    <location>
        <begin position="1"/>
        <end position="257"/>
    </location>
</feature>
<feature type="topological domain" description="Cytoplasmic" evidence="2">
    <location>
        <begin position="1"/>
        <end position="16"/>
    </location>
</feature>
<feature type="transmembrane region" description="Helical" evidence="2">
    <location>
        <begin position="17"/>
        <end position="37"/>
    </location>
</feature>
<feature type="topological domain" description="Periplasmic" evidence="2">
    <location>
        <begin position="38"/>
        <end position="257"/>
    </location>
</feature>
<feature type="domain" description="OmpA-like" evidence="3">
    <location>
        <begin position="113"/>
        <end position="236"/>
    </location>
</feature>
<feature type="region of interest" description="Disordered" evidence="4">
    <location>
        <begin position="74"/>
        <end position="100"/>
    </location>
</feature>
<feature type="compositionally biased region" description="Polar residues" evidence="4">
    <location>
        <begin position="83"/>
        <end position="97"/>
    </location>
</feature>
<protein>
    <recommendedName>
        <fullName>Motility protein B</fullName>
    </recommendedName>
    <alternativeName>
        <fullName>Chemotaxis protein MotB</fullName>
    </alternativeName>
</protein>
<reference key="1">
    <citation type="journal article" date="1999" name="Nature">
        <title>Genomic sequence comparison of two unrelated isolates of the human gastric pathogen Helicobacter pylori.</title>
        <authorList>
            <person name="Alm R.A."/>
            <person name="Ling L.-S.L."/>
            <person name="Moir D.T."/>
            <person name="King B.L."/>
            <person name="Brown E.D."/>
            <person name="Doig P.C."/>
            <person name="Smith D.R."/>
            <person name="Noonan B."/>
            <person name="Guild B.C."/>
            <person name="deJonge B.L."/>
            <person name="Carmel G."/>
            <person name="Tummino P.J."/>
            <person name="Caruso A."/>
            <person name="Uria-Nickelsen M."/>
            <person name="Mills D.M."/>
            <person name="Ives C."/>
            <person name="Gibson R."/>
            <person name="Merberg D."/>
            <person name="Mills S.D."/>
            <person name="Jiang Q."/>
            <person name="Taylor D.E."/>
            <person name="Vovis G.F."/>
            <person name="Trust T.J."/>
        </authorList>
    </citation>
    <scope>NUCLEOTIDE SEQUENCE [LARGE SCALE GENOMIC DNA]</scope>
    <source>
        <strain>J99 / ATCC 700824</strain>
    </source>
</reference>
<organism>
    <name type="scientific">Helicobacter pylori (strain J99 / ATCC 700824)</name>
    <name type="common">Campylobacter pylori J99</name>
    <dbReference type="NCBI Taxonomy" id="85963"/>
    <lineage>
        <taxon>Bacteria</taxon>
        <taxon>Pseudomonadati</taxon>
        <taxon>Campylobacterota</taxon>
        <taxon>Epsilonproteobacteria</taxon>
        <taxon>Campylobacterales</taxon>
        <taxon>Helicobacteraceae</taxon>
        <taxon>Helicobacter</taxon>
    </lineage>
</organism>
<gene>
    <name type="primary">motB</name>
    <name type="ordered locus">jhp_0752</name>
</gene>
<accession>Q9ZL29</accession>
<name>MOTB_HELPJ</name>
<keyword id="KW-0997">Cell inner membrane</keyword>
<keyword id="KW-1003">Cell membrane</keyword>
<keyword id="KW-0145">Chemotaxis</keyword>
<keyword id="KW-0283">Flagellar rotation</keyword>
<keyword id="KW-0472">Membrane</keyword>
<keyword id="KW-0812">Transmembrane</keyword>
<keyword id="KW-1133">Transmembrane helix</keyword>
<dbReference type="EMBL" id="AE001439">
    <property type="protein sequence ID" value="AAD06331.1"/>
    <property type="molecule type" value="Genomic_DNA"/>
</dbReference>
<dbReference type="PIR" id="B71892">
    <property type="entry name" value="B71892"/>
</dbReference>
<dbReference type="RefSeq" id="WP_001085351.1">
    <property type="nucleotide sequence ID" value="NZ_CP011330.1"/>
</dbReference>
<dbReference type="SMR" id="Q9ZL29"/>
<dbReference type="KEGG" id="hpj:jhp_0752"/>
<dbReference type="PATRIC" id="fig|85963.30.peg.224"/>
<dbReference type="eggNOG" id="COG1360">
    <property type="taxonomic scope" value="Bacteria"/>
</dbReference>
<dbReference type="Proteomes" id="UP000000804">
    <property type="component" value="Chromosome"/>
</dbReference>
<dbReference type="GO" id="GO:0005886">
    <property type="term" value="C:plasma membrane"/>
    <property type="evidence" value="ECO:0007669"/>
    <property type="project" value="UniProtKB-SubCell"/>
</dbReference>
<dbReference type="GO" id="GO:0097588">
    <property type="term" value="P:archaeal or bacterial-type flagellum-dependent cell motility"/>
    <property type="evidence" value="ECO:0007669"/>
    <property type="project" value="UniProtKB-KW"/>
</dbReference>
<dbReference type="GO" id="GO:0006935">
    <property type="term" value="P:chemotaxis"/>
    <property type="evidence" value="ECO:0007669"/>
    <property type="project" value="UniProtKB-KW"/>
</dbReference>
<dbReference type="CDD" id="cd07185">
    <property type="entry name" value="OmpA_C-like"/>
    <property type="match status" value="1"/>
</dbReference>
<dbReference type="FunFam" id="3.30.1330.60:FF:000007">
    <property type="entry name" value="Flagellar motor protein MotB"/>
    <property type="match status" value="1"/>
</dbReference>
<dbReference type="Gene3D" id="3.30.1330.60">
    <property type="entry name" value="OmpA-like domain"/>
    <property type="match status" value="1"/>
</dbReference>
<dbReference type="InterPro" id="IPR050330">
    <property type="entry name" value="Bact_OuterMem_StrucFunc"/>
</dbReference>
<dbReference type="InterPro" id="IPR025713">
    <property type="entry name" value="MotB-like_N_dom"/>
</dbReference>
<dbReference type="InterPro" id="IPR006665">
    <property type="entry name" value="OmpA-like"/>
</dbReference>
<dbReference type="InterPro" id="IPR036737">
    <property type="entry name" value="OmpA-like_sf"/>
</dbReference>
<dbReference type="NCBIfam" id="NF006285">
    <property type="entry name" value="PRK08457.1"/>
    <property type="match status" value="1"/>
</dbReference>
<dbReference type="PANTHER" id="PTHR30329:SF21">
    <property type="entry name" value="LIPOPROTEIN YIAD-RELATED"/>
    <property type="match status" value="1"/>
</dbReference>
<dbReference type="PANTHER" id="PTHR30329">
    <property type="entry name" value="STATOR ELEMENT OF FLAGELLAR MOTOR COMPLEX"/>
    <property type="match status" value="1"/>
</dbReference>
<dbReference type="Pfam" id="PF13677">
    <property type="entry name" value="MotB_plug"/>
    <property type="match status" value="1"/>
</dbReference>
<dbReference type="Pfam" id="PF00691">
    <property type="entry name" value="OmpA"/>
    <property type="match status" value="1"/>
</dbReference>
<dbReference type="SUPFAM" id="SSF103088">
    <property type="entry name" value="OmpA-like"/>
    <property type="match status" value="1"/>
</dbReference>
<dbReference type="PROSITE" id="PS51123">
    <property type="entry name" value="OMPA_2"/>
    <property type="match status" value="1"/>
</dbReference>
<comment type="function">
    <text evidence="1">MotA and MotB comprise the stator element of the flagellar motor complex. Required for the rotation of the flagellar motor. Might be a linker that fastens the torque-generating machinery to the cell wall (By similarity).</text>
</comment>
<comment type="subunit">
    <text evidence="1">Each stator complex is composed of 4 MotA and 2 MotB subunits. 2 A subunits and 1 B subunit are thought to form a single ion channel, so that each stator complex contains two channels (By similarity).</text>
</comment>
<comment type="subcellular location">
    <subcellularLocation>
        <location evidence="1">Cell inner membrane</location>
        <topology evidence="5">Single-pass type II membrane protein</topology>
    </subcellularLocation>
</comment>
<comment type="similarity">
    <text evidence="5">Belongs to the MotB family.</text>
</comment>
<proteinExistence type="inferred from homology"/>
<sequence>MAKKNKPTECPAGEKWAVPYADFLSLLLALFIALYAISAVNKSKVEALKTEFIKIFNYAPKPEAMQPVVVIPPDSGKEEEQMASESSKPASQNTETKATIARKGEGSVLEQIDQGSVLKLPSSLLFENATSDAINQDMMLYIERIAKIIQKLPKRVHINVRGFTDNTPLNKTRFKSHYELAANRAYRVMKVLIQYGVDPNQLSFSSYGSTNPIAPNDSLENRMKNNRVEIFFSTDANDLSKIHSILDEEFNPHKQQE</sequence>
<evidence type="ECO:0000250" key="1"/>
<evidence type="ECO:0000255" key="2"/>
<evidence type="ECO:0000255" key="3">
    <source>
        <dbReference type="PROSITE-ProRule" id="PRU00473"/>
    </source>
</evidence>
<evidence type="ECO:0000256" key="4">
    <source>
        <dbReference type="SAM" id="MobiDB-lite"/>
    </source>
</evidence>
<evidence type="ECO:0000305" key="5"/>